<accession>Q63JZ3</accession>
<dbReference type="EC" id="7.6.2.7" evidence="1"/>
<dbReference type="EMBL" id="BX571966">
    <property type="protein sequence ID" value="CAH39046.1"/>
    <property type="molecule type" value="Genomic_DNA"/>
</dbReference>
<dbReference type="RefSeq" id="WP_004536558.1">
    <property type="nucleotide sequence ID" value="NZ_CP009537.1"/>
</dbReference>
<dbReference type="RefSeq" id="YP_111579.1">
    <property type="nucleotide sequence ID" value="NC_006351.1"/>
</dbReference>
<dbReference type="SMR" id="Q63JZ3"/>
<dbReference type="STRING" id="272560.BPSS1573"/>
<dbReference type="KEGG" id="bps:BPSS1573"/>
<dbReference type="PATRIC" id="fig|272560.51.peg.4945"/>
<dbReference type="eggNOG" id="COG4525">
    <property type="taxonomic scope" value="Bacteria"/>
</dbReference>
<dbReference type="Proteomes" id="UP000000605">
    <property type="component" value="Chromosome 2"/>
</dbReference>
<dbReference type="GO" id="GO:0005886">
    <property type="term" value="C:plasma membrane"/>
    <property type="evidence" value="ECO:0007669"/>
    <property type="project" value="UniProtKB-SubCell"/>
</dbReference>
<dbReference type="GO" id="GO:0015411">
    <property type="term" value="F:ABC-type taurine transporter transporter activity"/>
    <property type="evidence" value="ECO:0007669"/>
    <property type="project" value="UniProtKB-EC"/>
</dbReference>
<dbReference type="GO" id="GO:0005524">
    <property type="term" value="F:ATP binding"/>
    <property type="evidence" value="ECO:0007669"/>
    <property type="project" value="UniProtKB-KW"/>
</dbReference>
<dbReference type="GO" id="GO:0016887">
    <property type="term" value="F:ATP hydrolysis activity"/>
    <property type="evidence" value="ECO:0007669"/>
    <property type="project" value="InterPro"/>
</dbReference>
<dbReference type="CDD" id="cd03293">
    <property type="entry name" value="ABC_NrtD_SsuB_transporters"/>
    <property type="match status" value="1"/>
</dbReference>
<dbReference type="Gene3D" id="3.40.50.300">
    <property type="entry name" value="P-loop containing nucleotide triphosphate hydrolases"/>
    <property type="match status" value="1"/>
</dbReference>
<dbReference type="InterPro" id="IPR003593">
    <property type="entry name" value="AAA+_ATPase"/>
</dbReference>
<dbReference type="InterPro" id="IPR003439">
    <property type="entry name" value="ABC_transporter-like_ATP-bd"/>
</dbReference>
<dbReference type="InterPro" id="IPR017871">
    <property type="entry name" value="ABC_transporter-like_CS"/>
</dbReference>
<dbReference type="InterPro" id="IPR050166">
    <property type="entry name" value="ABC_transporter_ATP-bind"/>
</dbReference>
<dbReference type="InterPro" id="IPR027417">
    <property type="entry name" value="P-loop_NTPase"/>
</dbReference>
<dbReference type="PANTHER" id="PTHR42788:SF18">
    <property type="entry name" value="TAURINE IMPORT ATP-BINDING PROTEIN TAUB"/>
    <property type="match status" value="1"/>
</dbReference>
<dbReference type="PANTHER" id="PTHR42788">
    <property type="entry name" value="TAURINE IMPORT ATP-BINDING PROTEIN-RELATED"/>
    <property type="match status" value="1"/>
</dbReference>
<dbReference type="Pfam" id="PF00005">
    <property type="entry name" value="ABC_tran"/>
    <property type="match status" value="1"/>
</dbReference>
<dbReference type="SMART" id="SM00382">
    <property type="entry name" value="AAA"/>
    <property type="match status" value="1"/>
</dbReference>
<dbReference type="SUPFAM" id="SSF52540">
    <property type="entry name" value="P-loop containing nucleoside triphosphate hydrolases"/>
    <property type="match status" value="1"/>
</dbReference>
<dbReference type="PROSITE" id="PS00211">
    <property type="entry name" value="ABC_TRANSPORTER_1"/>
    <property type="match status" value="1"/>
</dbReference>
<dbReference type="PROSITE" id="PS50893">
    <property type="entry name" value="ABC_TRANSPORTER_2"/>
    <property type="match status" value="1"/>
</dbReference>
<dbReference type="PROSITE" id="PS51250">
    <property type="entry name" value="TAUB"/>
    <property type="match status" value="1"/>
</dbReference>
<evidence type="ECO:0000255" key="1">
    <source>
        <dbReference type="HAMAP-Rule" id="MF_01714"/>
    </source>
</evidence>
<gene>
    <name evidence="1" type="primary">tauB</name>
    <name type="ordered locus">BPSS1573</name>
</gene>
<keyword id="KW-0067">ATP-binding</keyword>
<keyword id="KW-0997">Cell inner membrane</keyword>
<keyword id="KW-1003">Cell membrane</keyword>
<keyword id="KW-0472">Membrane</keyword>
<keyword id="KW-0547">Nucleotide-binding</keyword>
<keyword id="KW-1185">Reference proteome</keyword>
<keyword id="KW-1278">Translocase</keyword>
<keyword id="KW-0813">Transport</keyword>
<protein>
    <recommendedName>
        <fullName evidence="1">Taurine import ATP-binding protein TauB</fullName>
        <ecNumber evidence="1">7.6.2.7</ecNumber>
    </recommendedName>
</protein>
<sequence>MAKLCAQQVSVVYASRRGALTALENVSMSVGSGEIVVALGASGCGKSTLLSLLAGFQPPTSGRVSVDGVPVAGPGADRGVVFQDDALMPWLNVIENVAFGLRMQGVGRDARHARARDVLRLVKLAGFEQHRIDEISGGMRQRVGLARALAADPSFLLMDEPLGALDALTREHMQTLLLDVWRATGKGVFLITHSVEEAVLLATELLILSPRPGRIVARHALDFARRYAHGEPVRSIKSDPRFTEIHLALVEQLMRETEEV</sequence>
<reference key="1">
    <citation type="journal article" date="2004" name="Proc. Natl. Acad. Sci. U.S.A.">
        <title>Genomic plasticity of the causative agent of melioidosis, Burkholderia pseudomallei.</title>
        <authorList>
            <person name="Holden M.T.G."/>
            <person name="Titball R.W."/>
            <person name="Peacock S.J."/>
            <person name="Cerdeno-Tarraga A.-M."/>
            <person name="Atkins T."/>
            <person name="Crossman L.C."/>
            <person name="Pitt T."/>
            <person name="Churcher C."/>
            <person name="Mungall K.L."/>
            <person name="Bentley S.D."/>
            <person name="Sebaihia M."/>
            <person name="Thomson N.R."/>
            <person name="Bason N."/>
            <person name="Beacham I.R."/>
            <person name="Brooks K."/>
            <person name="Brown K.A."/>
            <person name="Brown N.F."/>
            <person name="Challis G.L."/>
            <person name="Cherevach I."/>
            <person name="Chillingworth T."/>
            <person name="Cronin A."/>
            <person name="Crossett B."/>
            <person name="Davis P."/>
            <person name="DeShazer D."/>
            <person name="Feltwell T."/>
            <person name="Fraser A."/>
            <person name="Hance Z."/>
            <person name="Hauser H."/>
            <person name="Holroyd S."/>
            <person name="Jagels K."/>
            <person name="Keith K.E."/>
            <person name="Maddison M."/>
            <person name="Moule S."/>
            <person name="Price C."/>
            <person name="Quail M.A."/>
            <person name="Rabbinowitsch E."/>
            <person name="Rutherford K."/>
            <person name="Sanders M."/>
            <person name="Simmonds M."/>
            <person name="Songsivilai S."/>
            <person name="Stevens K."/>
            <person name="Tumapa S."/>
            <person name="Vesaratchavest M."/>
            <person name="Whitehead S."/>
            <person name="Yeats C."/>
            <person name="Barrell B.G."/>
            <person name="Oyston P.C.F."/>
            <person name="Parkhill J."/>
        </authorList>
    </citation>
    <scope>NUCLEOTIDE SEQUENCE [LARGE SCALE GENOMIC DNA]</scope>
    <source>
        <strain>K96243</strain>
    </source>
</reference>
<proteinExistence type="inferred from homology"/>
<name>TAUB_BURPS</name>
<feature type="chain" id="PRO_0000093005" description="Taurine import ATP-binding protein TauB">
    <location>
        <begin position="1"/>
        <end position="260"/>
    </location>
</feature>
<feature type="domain" description="ABC transporter" evidence="1">
    <location>
        <begin position="6"/>
        <end position="235"/>
    </location>
</feature>
<feature type="binding site" evidence="1">
    <location>
        <begin position="40"/>
        <end position="47"/>
    </location>
    <ligand>
        <name>ATP</name>
        <dbReference type="ChEBI" id="CHEBI:30616"/>
    </ligand>
</feature>
<comment type="function">
    <text evidence="1">Part of the ABC transporter complex TauABC involved in taurine import. Responsible for energy coupling to the transport system.</text>
</comment>
<comment type="catalytic activity">
    <reaction evidence="1">
        <text>taurine(out) + ATP + H2O = taurine(in) + ADP + phosphate + H(+)</text>
        <dbReference type="Rhea" id="RHEA:14613"/>
        <dbReference type="ChEBI" id="CHEBI:15377"/>
        <dbReference type="ChEBI" id="CHEBI:15378"/>
        <dbReference type="ChEBI" id="CHEBI:30616"/>
        <dbReference type="ChEBI" id="CHEBI:43474"/>
        <dbReference type="ChEBI" id="CHEBI:456216"/>
        <dbReference type="ChEBI" id="CHEBI:507393"/>
        <dbReference type="EC" id="7.6.2.7"/>
    </reaction>
</comment>
<comment type="subunit">
    <text evidence="1">The complex is composed of two ATP-binding proteins (TauB), two transmembrane proteins (TauC) and a solute-binding protein (TauA).</text>
</comment>
<comment type="subcellular location">
    <subcellularLocation>
        <location evidence="1">Cell inner membrane</location>
        <topology evidence="1">Peripheral membrane protein</topology>
    </subcellularLocation>
</comment>
<comment type="similarity">
    <text evidence="1">Belongs to the ABC transporter superfamily. Taurine importer (TC 3.A.1.17.1) family.</text>
</comment>
<organism>
    <name type="scientific">Burkholderia pseudomallei (strain K96243)</name>
    <dbReference type="NCBI Taxonomy" id="272560"/>
    <lineage>
        <taxon>Bacteria</taxon>
        <taxon>Pseudomonadati</taxon>
        <taxon>Pseudomonadota</taxon>
        <taxon>Betaproteobacteria</taxon>
        <taxon>Burkholderiales</taxon>
        <taxon>Burkholderiaceae</taxon>
        <taxon>Burkholderia</taxon>
        <taxon>pseudomallei group</taxon>
    </lineage>
</organism>